<name>EX7S_ECO55</name>
<sequence>MPKKNEAPASFEKALSELEQIVTRLESGDLPLEEALNEFERGVQLARQGQAKLQQAEQRVQILLSDNEDASLTPFTPDNE</sequence>
<proteinExistence type="inferred from homology"/>
<reference key="1">
    <citation type="journal article" date="2009" name="PLoS Genet.">
        <title>Organised genome dynamics in the Escherichia coli species results in highly diverse adaptive paths.</title>
        <authorList>
            <person name="Touchon M."/>
            <person name="Hoede C."/>
            <person name="Tenaillon O."/>
            <person name="Barbe V."/>
            <person name="Baeriswyl S."/>
            <person name="Bidet P."/>
            <person name="Bingen E."/>
            <person name="Bonacorsi S."/>
            <person name="Bouchier C."/>
            <person name="Bouvet O."/>
            <person name="Calteau A."/>
            <person name="Chiapello H."/>
            <person name="Clermont O."/>
            <person name="Cruveiller S."/>
            <person name="Danchin A."/>
            <person name="Diard M."/>
            <person name="Dossat C."/>
            <person name="Karoui M.E."/>
            <person name="Frapy E."/>
            <person name="Garry L."/>
            <person name="Ghigo J.M."/>
            <person name="Gilles A.M."/>
            <person name="Johnson J."/>
            <person name="Le Bouguenec C."/>
            <person name="Lescat M."/>
            <person name="Mangenot S."/>
            <person name="Martinez-Jehanne V."/>
            <person name="Matic I."/>
            <person name="Nassif X."/>
            <person name="Oztas S."/>
            <person name="Petit M.A."/>
            <person name="Pichon C."/>
            <person name="Rouy Z."/>
            <person name="Ruf C.S."/>
            <person name="Schneider D."/>
            <person name="Tourret J."/>
            <person name="Vacherie B."/>
            <person name="Vallenet D."/>
            <person name="Medigue C."/>
            <person name="Rocha E.P.C."/>
            <person name="Denamur E."/>
        </authorList>
    </citation>
    <scope>NUCLEOTIDE SEQUENCE [LARGE SCALE GENOMIC DNA]</scope>
    <source>
        <strain>55989 / EAEC</strain>
    </source>
</reference>
<organism>
    <name type="scientific">Escherichia coli (strain 55989 / EAEC)</name>
    <dbReference type="NCBI Taxonomy" id="585055"/>
    <lineage>
        <taxon>Bacteria</taxon>
        <taxon>Pseudomonadati</taxon>
        <taxon>Pseudomonadota</taxon>
        <taxon>Gammaproteobacteria</taxon>
        <taxon>Enterobacterales</taxon>
        <taxon>Enterobacteriaceae</taxon>
        <taxon>Escherichia</taxon>
    </lineage>
</organism>
<gene>
    <name evidence="1" type="primary">xseB</name>
    <name type="ordered locus">EC55989_0432</name>
</gene>
<protein>
    <recommendedName>
        <fullName evidence="1">Exodeoxyribonuclease 7 small subunit</fullName>
        <ecNumber evidence="1">3.1.11.6</ecNumber>
    </recommendedName>
    <alternativeName>
        <fullName evidence="1">Exodeoxyribonuclease VII small subunit</fullName>
        <shortName evidence="1">Exonuclease VII small subunit</shortName>
    </alternativeName>
</protein>
<dbReference type="EC" id="3.1.11.6" evidence="1"/>
<dbReference type="EMBL" id="CU928145">
    <property type="protein sequence ID" value="CAU96306.1"/>
    <property type="molecule type" value="Genomic_DNA"/>
</dbReference>
<dbReference type="RefSeq" id="WP_001124935.1">
    <property type="nucleotide sequence ID" value="NZ_CP028304.1"/>
</dbReference>
<dbReference type="SMR" id="B7L656"/>
<dbReference type="GeneID" id="75202844"/>
<dbReference type="KEGG" id="eck:EC55989_0432"/>
<dbReference type="HOGENOM" id="CLU_145918_3_3_6"/>
<dbReference type="Proteomes" id="UP000000746">
    <property type="component" value="Chromosome"/>
</dbReference>
<dbReference type="GO" id="GO:0005829">
    <property type="term" value="C:cytosol"/>
    <property type="evidence" value="ECO:0007669"/>
    <property type="project" value="TreeGrafter"/>
</dbReference>
<dbReference type="GO" id="GO:0009318">
    <property type="term" value="C:exodeoxyribonuclease VII complex"/>
    <property type="evidence" value="ECO:0007669"/>
    <property type="project" value="InterPro"/>
</dbReference>
<dbReference type="GO" id="GO:0008855">
    <property type="term" value="F:exodeoxyribonuclease VII activity"/>
    <property type="evidence" value="ECO:0007669"/>
    <property type="project" value="UniProtKB-UniRule"/>
</dbReference>
<dbReference type="GO" id="GO:0006308">
    <property type="term" value="P:DNA catabolic process"/>
    <property type="evidence" value="ECO:0007669"/>
    <property type="project" value="UniProtKB-UniRule"/>
</dbReference>
<dbReference type="FunFam" id="1.10.287.1040:FF:000001">
    <property type="entry name" value="Exodeoxyribonuclease 7 small subunit"/>
    <property type="match status" value="1"/>
</dbReference>
<dbReference type="Gene3D" id="1.10.287.1040">
    <property type="entry name" value="Exonuclease VII, small subunit"/>
    <property type="match status" value="1"/>
</dbReference>
<dbReference type="HAMAP" id="MF_00337">
    <property type="entry name" value="Exonuc_7_S"/>
    <property type="match status" value="1"/>
</dbReference>
<dbReference type="InterPro" id="IPR003761">
    <property type="entry name" value="Exonuc_VII_S"/>
</dbReference>
<dbReference type="InterPro" id="IPR037004">
    <property type="entry name" value="Exonuc_VII_ssu_sf"/>
</dbReference>
<dbReference type="NCBIfam" id="NF002137">
    <property type="entry name" value="PRK00977.1-1"/>
    <property type="match status" value="1"/>
</dbReference>
<dbReference type="NCBIfam" id="NF002140">
    <property type="entry name" value="PRK00977.1-4"/>
    <property type="match status" value="1"/>
</dbReference>
<dbReference type="NCBIfam" id="TIGR01280">
    <property type="entry name" value="xseB"/>
    <property type="match status" value="1"/>
</dbReference>
<dbReference type="PANTHER" id="PTHR34137">
    <property type="entry name" value="EXODEOXYRIBONUCLEASE 7 SMALL SUBUNIT"/>
    <property type="match status" value="1"/>
</dbReference>
<dbReference type="PANTHER" id="PTHR34137:SF1">
    <property type="entry name" value="EXODEOXYRIBONUCLEASE 7 SMALL SUBUNIT"/>
    <property type="match status" value="1"/>
</dbReference>
<dbReference type="Pfam" id="PF02609">
    <property type="entry name" value="Exonuc_VII_S"/>
    <property type="match status" value="1"/>
</dbReference>
<dbReference type="PIRSF" id="PIRSF006488">
    <property type="entry name" value="Exonuc_VII_S"/>
    <property type="match status" value="1"/>
</dbReference>
<dbReference type="SUPFAM" id="SSF116842">
    <property type="entry name" value="XseB-like"/>
    <property type="match status" value="1"/>
</dbReference>
<feature type="chain" id="PRO_1000200250" description="Exodeoxyribonuclease 7 small subunit">
    <location>
        <begin position="1"/>
        <end position="80"/>
    </location>
</feature>
<comment type="function">
    <text evidence="1">Bidirectionally degrades single-stranded DNA into large acid-insoluble oligonucleotides, which are then degraded further into small acid-soluble oligonucleotides.</text>
</comment>
<comment type="catalytic activity">
    <reaction evidence="1">
        <text>Exonucleolytic cleavage in either 5'- to 3'- or 3'- to 5'-direction to yield nucleoside 5'-phosphates.</text>
        <dbReference type="EC" id="3.1.11.6"/>
    </reaction>
</comment>
<comment type="subunit">
    <text evidence="1">Heterooligomer composed of large and small subunits.</text>
</comment>
<comment type="subcellular location">
    <subcellularLocation>
        <location evidence="1">Cytoplasm</location>
    </subcellularLocation>
</comment>
<comment type="similarity">
    <text evidence="1">Belongs to the XseB family.</text>
</comment>
<evidence type="ECO:0000255" key="1">
    <source>
        <dbReference type="HAMAP-Rule" id="MF_00337"/>
    </source>
</evidence>
<accession>B7L656</accession>
<keyword id="KW-0963">Cytoplasm</keyword>
<keyword id="KW-0269">Exonuclease</keyword>
<keyword id="KW-0378">Hydrolase</keyword>
<keyword id="KW-0540">Nuclease</keyword>
<keyword id="KW-1185">Reference proteome</keyword>